<accession>A8A2T4</accession>
<comment type="function">
    <text evidence="1">Involved in the heme biosynthesis. Catalyzes the aerobic oxidative decarboxylation of propionate groups of rings A and B of coproporphyrinogen-III to yield the vinyl groups in protoporphyrinogen-IX.</text>
</comment>
<comment type="catalytic activity">
    <reaction evidence="1">
        <text>coproporphyrinogen III + O2 + 2 H(+) = protoporphyrinogen IX + 2 CO2 + 2 H2O</text>
        <dbReference type="Rhea" id="RHEA:18257"/>
        <dbReference type="ChEBI" id="CHEBI:15377"/>
        <dbReference type="ChEBI" id="CHEBI:15378"/>
        <dbReference type="ChEBI" id="CHEBI:15379"/>
        <dbReference type="ChEBI" id="CHEBI:16526"/>
        <dbReference type="ChEBI" id="CHEBI:57307"/>
        <dbReference type="ChEBI" id="CHEBI:57309"/>
        <dbReference type="EC" id="1.3.3.3"/>
    </reaction>
</comment>
<comment type="cofactor">
    <cofactor evidence="1">
        <name>Mn(2+)</name>
        <dbReference type="ChEBI" id="CHEBI:29035"/>
    </cofactor>
</comment>
<comment type="pathway">
    <text evidence="1">Porphyrin-containing compound metabolism; protoporphyrin-IX biosynthesis; protoporphyrinogen-IX from coproporphyrinogen-III (O2 route): step 1/1.</text>
</comment>
<comment type="subunit">
    <text evidence="1">Homodimer.</text>
</comment>
<comment type="subcellular location">
    <subcellularLocation>
        <location evidence="1">Cytoplasm</location>
    </subcellularLocation>
</comment>
<comment type="similarity">
    <text evidence="1">Belongs to the aerobic coproporphyrinogen-III oxidase family.</text>
</comment>
<protein>
    <recommendedName>
        <fullName evidence="1">Oxygen-dependent coproporphyrinogen-III oxidase</fullName>
        <shortName evidence="1">CPO</shortName>
        <shortName evidence="1">Coprogen oxidase</shortName>
        <shortName evidence="1">Coproporphyrinogenase</shortName>
        <ecNumber evidence="1">1.3.3.3</ecNumber>
    </recommendedName>
</protein>
<keyword id="KW-0963">Cytoplasm</keyword>
<keyword id="KW-0350">Heme biosynthesis</keyword>
<keyword id="KW-0464">Manganese</keyword>
<keyword id="KW-0479">Metal-binding</keyword>
<keyword id="KW-0560">Oxidoreductase</keyword>
<keyword id="KW-0627">Porphyrin biosynthesis</keyword>
<dbReference type="EC" id="1.3.3.3" evidence="1"/>
<dbReference type="EMBL" id="CP000802">
    <property type="protein sequence ID" value="ABV06838.1"/>
    <property type="molecule type" value="Genomic_DNA"/>
</dbReference>
<dbReference type="RefSeq" id="WP_000801365.1">
    <property type="nucleotide sequence ID" value="NC_009800.1"/>
</dbReference>
<dbReference type="SMR" id="A8A2T4"/>
<dbReference type="KEGG" id="ecx:EcHS_A2573"/>
<dbReference type="HOGENOM" id="CLU_026169_0_1_6"/>
<dbReference type="UniPathway" id="UPA00251">
    <property type="reaction ID" value="UER00322"/>
</dbReference>
<dbReference type="GO" id="GO:0005737">
    <property type="term" value="C:cytoplasm"/>
    <property type="evidence" value="ECO:0007669"/>
    <property type="project" value="UniProtKB-SubCell"/>
</dbReference>
<dbReference type="GO" id="GO:0004109">
    <property type="term" value="F:coproporphyrinogen oxidase activity"/>
    <property type="evidence" value="ECO:0007669"/>
    <property type="project" value="UniProtKB-UniRule"/>
</dbReference>
<dbReference type="GO" id="GO:0030145">
    <property type="term" value="F:manganese ion binding"/>
    <property type="evidence" value="ECO:0007669"/>
    <property type="project" value="UniProtKB-UniRule"/>
</dbReference>
<dbReference type="GO" id="GO:0042803">
    <property type="term" value="F:protein homodimerization activity"/>
    <property type="evidence" value="ECO:0000250"/>
    <property type="project" value="UniProtKB"/>
</dbReference>
<dbReference type="GO" id="GO:0006782">
    <property type="term" value="P:protoporphyrinogen IX biosynthetic process"/>
    <property type="evidence" value="ECO:0007669"/>
    <property type="project" value="UniProtKB-UniRule"/>
</dbReference>
<dbReference type="FunFam" id="3.40.1500.10:FF:000001">
    <property type="entry name" value="Oxygen-dependent coproporphyrinogen-III oxidase"/>
    <property type="match status" value="1"/>
</dbReference>
<dbReference type="Gene3D" id="3.40.1500.10">
    <property type="entry name" value="Coproporphyrinogen III oxidase, aerobic"/>
    <property type="match status" value="1"/>
</dbReference>
<dbReference type="HAMAP" id="MF_00333">
    <property type="entry name" value="Coprogen_oxidas"/>
    <property type="match status" value="1"/>
</dbReference>
<dbReference type="InterPro" id="IPR001260">
    <property type="entry name" value="Coprogen_oxidase_aer"/>
</dbReference>
<dbReference type="InterPro" id="IPR036406">
    <property type="entry name" value="Coprogen_oxidase_aer_sf"/>
</dbReference>
<dbReference type="InterPro" id="IPR018375">
    <property type="entry name" value="Coprogen_oxidase_CS"/>
</dbReference>
<dbReference type="NCBIfam" id="NF003727">
    <property type="entry name" value="PRK05330.1"/>
    <property type="match status" value="1"/>
</dbReference>
<dbReference type="PANTHER" id="PTHR10755">
    <property type="entry name" value="COPROPORPHYRINOGEN III OXIDASE, MITOCHONDRIAL"/>
    <property type="match status" value="1"/>
</dbReference>
<dbReference type="PANTHER" id="PTHR10755:SF0">
    <property type="entry name" value="OXYGEN-DEPENDENT COPROPORPHYRINOGEN-III OXIDASE, MITOCHONDRIAL"/>
    <property type="match status" value="1"/>
</dbReference>
<dbReference type="Pfam" id="PF01218">
    <property type="entry name" value="Coprogen_oxidas"/>
    <property type="match status" value="1"/>
</dbReference>
<dbReference type="PIRSF" id="PIRSF000166">
    <property type="entry name" value="Coproporphyri_ox"/>
    <property type="match status" value="1"/>
</dbReference>
<dbReference type="PRINTS" id="PR00073">
    <property type="entry name" value="COPRGNOXDASE"/>
</dbReference>
<dbReference type="SUPFAM" id="SSF102886">
    <property type="entry name" value="Coproporphyrinogen III oxidase"/>
    <property type="match status" value="1"/>
</dbReference>
<dbReference type="PROSITE" id="PS01021">
    <property type="entry name" value="COPROGEN_OXIDASE"/>
    <property type="match status" value="1"/>
</dbReference>
<feature type="chain" id="PRO_1000059705" description="Oxygen-dependent coproporphyrinogen-III oxidase">
    <location>
        <begin position="1"/>
        <end position="299"/>
    </location>
</feature>
<feature type="region of interest" description="Important for dimerization" evidence="1">
    <location>
        <begin position="240"/>
        <end position="275"/>
    </location>
</feature>
<feature type="active site" description="Proton donor" evidence="1">
    <location>
        <position position="106"/>
    </location>
</feature>
<feature type="binding site" evidence="1">
    <location>
        <position position="92"/>
    </location>
    <ligand>
        <name>substrate</name>
    </ligand>
</feature>
<feature type="binding site" evidence="1">
    <location>
        <position position="96"/>
    </location>
    <ligand>
        <name>Mn(2+)</name>
        <dbReference type="ChEBI" id="CHEBI:29035"/>
    </ligand>
</feature>
<feature type="binding site" evidence="1">
    <location>
        <position position="106"/>
    </location>
    <ligand>
        <name>Mn(2+)</name>
        <dbReference type="ChEBI" id="CHEBI:29035"/>
    </ligand>
</feature>
<feature type="binding site" evidence="1">
    <location>
        <begin position="108"/>
        <end position="110"/>
    </location>
    <ligand>
        <name>substrate</name>
    </ligand>
</feature>
<feature type="binding site" evidence="1">
    <location>
        <position position="145"/>
    </location>
    <ligand>
        <name>Mn(2+)</name>
        <dbReference type="ChEBI" id="CHEBI:29035"/>
    </ligand>
</feature>
<feature type="binding site" evidence="1">
    <location>
        <position position="175"/>
    </location>
    <ligand>
        <name>Mn(2+)</name>
        <dbReference type="ChEBI" id="CHEBI:29035"/>
    </ligand>
</feature>
<feature type="binding site" evidence="1">
    <location>
        <begin position="258"/>
        <end position="260"/>
    </location>
    <ligand>
        <name>substrate</name>
    </ligand>
</feature>
<feature type="site" description="Important for dimerization" evidence="1">
    <location>
        <position position="175"/>
    </location>
</feature>
<evidence type="ECO:0000255" key="1">
    <source>
        <dbReference type="HAMAP-Rule" id="MF_00333"/>
    </source>
</evidence>
<organism>
    <name type="scientific">Escherichia coli O9:H4 (strain HS)</name>
    <dbReference type="NCBI Taxonomy" id="331112"/>
    <lineage>
        <taxon>Bacteria</taxon>
        <taxon>Pseudomonadati</taxon>
        <taxon>Pseudomonadota</taxon>
        <taxon>Gammaproteobacteria</taxon>
        <taxon>Enterobacterales</taxon>
        <taxon>Enterobacteriaceae</taxon>
        <taxon>Escherichia</taxon>
    </lineage>
</organism>
<proteinExistence type="inferred from homology"/>
<gene>
    <name evidence="1" type="primary">hemF</name>
    <name type="ordered locus">EcHS_A2573</name>
</gene>
<name>HEM6_ECOHS</name>
<sequence length="299" mass="34323">MKPDAHQVKQFLLNLQDTICQQLTAVDGAEFVEDSWQREAGGGGRSRVLRNGGVFEQAGVNFSHVHGEAMPASATAHRPELAGRSFEAMGVSLVVHPHNPYVPTSHANVRFFIAEKPGADPVWWFGGGFDLTPFYGFEEDAIHWHRTARDLCLPFGEDVYPRYKKWCDEYFYLKHRNEQRGIGGLFFDDLNTPDFDRCFAFMQAVGKGYTDAYLPIVERRKAMAYGERERNFQLYRRGRYVEFNLVWDRGTLFGLQTGGRTESILMSMPPLVRWEYDYQPKDGSPEAALSEFIKVRDWV</sequence>
<reference key="1">
    <citation type="journal article" date="2008" name="J. Bacteriol.">
        <title>The pangenome structure of Escherichia coli: comparative genomic analysis of E. coli commensal and pathogenic isolates.</title>
        <authorList>
            <person name="Rasko D.A."/>
            <person name="Rosovitz M.J."/>
            <person name="Myers G.S.A."/>
            <person name="Mongodin E.F."/>
            <person name="Fricke W.F."/>
            <person name="Gajer P."/>
            <person name="Crabtree J."/>
            <person name="Sebaihia M."/>
            <person name="Thomson N.R."/>
            <person name="Chaudhuri R."/>
            <person name="Henderson I.R."/>
            <person name="Sperandio V."/>
            <person name="Ravel J."/>
        </authorList>
    </citation>
    <scope>NUCLEOTIDE SEQUENCE [LARGE SCALE GENOMIC DNA]</scope>
    <source>
        <strain>HS</strain>
    </source>
</reference>